<evidence type="ECO:0000255" key="1">
    <source>
        <dbReference type="HAMAP-Rule" id="MF_01249"/>
    </source>
</evidence>
<proteinExistence type="inferred from homology"/>
<sequence>MSLDQKGLKKRSVTVAYFFENIGTTHDIKLRRLNSVDEQKRRIFERDLHRPGLALSGFTNLFTYKRVQILGNTETRFLNHLGEEERRQAFDNLVRFKVPCIILTSNNKLQPDLLEMATEQGIPVFVTRHSSTKAIYQVTDFLDDQFSLYQQYHGSMVDVYGVGVLLIGKSGLGKSEIALDLVERGHGLVADDVVVIRRKGESMQLSASRNNIIDHFMEIRGLGVVDVKANFGIRAIRDVKEVLVVAELLEWNKEMEYERLGLDTKSTKVLGVDVPLVQLPIFPGKNITVIIEVVALNVLLKRYSNYVAAEALTDRIKQVIKNDERTEGEIVL</sequence>
<organism>
    <name type="scientific">Chlorobium phaeovibrioides (strain DSM 265 / 1930)</name>
    <name type="common">Prosthecochloris vibrioformis (strain DSM 265)</name>
    <dbReference type="NCBI Taxonomy" id="290318"/>
    <lineage>
        <taxon>Bacteria</taxon>
        <taxon>Pseudomonadati</taxon>
        <taxon>Chlorobiota</taxon>
        <taxon>Chlorobiia</taxon>
        <taxon>Chlorobiales</taxon>
        <taxon>Chlorobiaceae</taxon>
        <taxon>Chlorobium/Pelodictyon group</taxon>
        <taxon>Chlorobium</taxon>
    </lineage>
</organism>
<dbReference type="EC" id="2.7.11.-" evidence="1"/>
<dbReference type="EC" id="2.7.4.-" evidence="1"/>
<dbReference type="EMBL" id="CP000607">
    <property type="protein sequence ID" value="ABP37423.1"/>
    <property type="molecule type" value="Genomic_DNA"/>
</dbReference>
<dbReference type="SMR" id="A4SG14"/>
<dbReference type="STRING" id="290318.Cvib_1412"/>
<dbReference type="KEGG" id="pvi:Cvib_1412"/>
<dbReference type="eggNOG" id="COG1493">
    <property type="taxonomic scope" value="Bacteria"/>
</dbReference>
<dbReference type="HOGENOM" id="CLU_052030_0_1_10"/>
<dbReference type="OrthoDB" id="9778803at2"/>
<dbReference type="GO" id="GO:0005524">
    <property type="term" value="F:ATP binding"/>
    <property type="evidence" value="ECO:0007669"/>
    <property type="project" value="UniProtKB-UniRule"/>
</dbReference>
<dbReference type="GO" id="GO:0000287">
    <property type="term" value="F:magnesium ion binding"/>
    <property type="evidence" value="ECO:0007669"/>
    <property type="project" value="UniProtKB-UniRule"/>
</dbReference>
<dbReference type="GO" id="GO:0000155">
    <property type="term" value="F:phosphorelay sensor kinase activity"/>
    <property type="evidence" value="ECO:0007669"/>
    <property type="project" value="InterPro"/>
</dbReference>
<dbReference type="GO" id="GO:0004674">
    <property type="term" value="F:protein serine/threonine kinase activity"/>
    <property type="evidence" value="ECO:0007669"/>
    <property type="project" value="UniProtKB-KW"/>
</dbReference>
<dbReference type="GO" id="GO:0004712">
    <property type="term" value="F:protein serine/threonine/tyrosine kinase activity"/>
    <property type="evidence" value="ECO:0007669"/>
    <property type="project" value="UniProtKB-UniRule"/>
</dbReference>
<dbReference type="GO" id="GO:0006109">
    <property type="term" value="P:regulation of carbohydrate metabolic process"/>
    <property type="evidence" value="ECO:0007669"/>
    <property type="project" value="UniProtKB-UniRule"/>
</dbReference>
<dbReference type="CDD" id="cd01918">
    <property type="entry name" value="HprK_C"/>
    <property type="match status" value="1"/>
</dbReference>
<dbReference type="Gene3D" id="3.40.1390.20">
    <property type="entry name" value="HprK N-terminal domain-like"/>
    <property type="match status" value="1"/>
</dbReference>
<dbReference type="Gene3D" id="3.40.50.300">
    <property type="entry name" value="P-loop containing nucleotide triphosphate hydrolases"/>
    <property type="match status" value="1"/>
</dbReference>
<dbReference type="HAMAP" id="MF_01249">
    <property type="entry name" value="HPr_kinase"/>
    <property type="match status" value="1"/>
</dbReference>
<dbReference type="InterPro" id="IPR003755">
    <property type="entry name" value="HPr(Ser)_kin/Pase"/>
</dbReference>
<dbReference type="InterPro" id="IPR011104">
    <property type="entry name" value="Hpr_kin/Pase_C"/>
</dbReference>
<dbReference type="InterPro" id="IPR011126">
    <property type="entry name" value="Hpr_kin/Pase_Hpr_N"/>
</dbReference>
<dbReference type="InterPro" id="IPR027417">
    <property type="entry name" value="P-loop_NTPase"/>
</dbReference>
<dbReference type="InterPro" id="IPR028979">
    <property type="entry name" value="Ser_kin/Pase_Hpr-like_N_sf"/>
</dbReference>
<dbReference type="NCBIfam" id="TIGR00679">
    <property type="entry name" value="hpr-ser"/>
    <property type="match status" value="1"/>
</dbReference>
<dbReference type="PANTHER" id="PTHR30305:SF1">
    <property type="entry name" value="HPR KINASE_PHOSPHORYLASE"/>
    <property type="match status" value="1"/>
</dbReference>
<dbReference type="PANTHER" id="PTHR30305">
    <property type="entry name" value="PROTEIN YJDM-RELATED"/>
    <property type="match status" value="1"/>
</dbReference>
<dbReference type="Pfam" id="PF07475">
    <property type="entry name" value="Hpr_kinase_C"/>
    <property type="match status" value="1"/>
</dbReference>
<dbReference type="Pfam" id="PF02603">
    <property type="entry name" value="Hpr_kinase_N"/>
    <property type="match status" value="1"/>
</dbReference>
<dbReference type="SUPFAM" id="SSF75138">
    <property type="entry name" value="HprK N-terminal domain-like"/>
    <property type="match status" value="1"/>
</dbReference>
<dbReference type="SUPFAM" id="SSF53795">
    <property type="entry name" value="PEP carboxykinase-like"/>
    <property type="match status" value="1"/>
</dbReference>
<reference key="1">
    <citation type="submission" date="2007-03" db="EMBL/GenBank/DDBJ databases">
        <title>Complete sequence of Prosthecochloris vibrioformis DSM 265.</title>
        <authorList>
            <consortium name="US DOE Joint Genome Institute"/>
            <person name="Copeland A."/>
            <person name="Lucas S."/>
            <person name="Lapidus A."/>
            <person name="Barry K."/>
            <person name="Detter J.C."/>
            <person name="Glavina del Rio T."/>
            <person name="Hammon N."/>
            <person name="Israni S."/>
            <person name="Pitluck S."/>
            <person name="Schmutz J."/>
            <person name="Larimer F."/>
            <person name="Land M."/>
            <person name="Hauser L."/>
            <person name="Mikhailova N."/>
            <person name="Li T."/>
            <person name="Overmann J."/>
            <person name="Schuster S.C."/>
            <person name="Bryant D.A."/>
            <person name="Richardson P."/>
        </authorList>
    </citation>
    <scope>NUCLEOTIDE SEQUENCE [LARGE SCALE GENOMIC DNA]</scope>
    <source>
        <strain>DSM 265 / 1930</strain>
    </source>
</reference>
<accession>A4SG14</accession>
<comment type="function">
    <text evidence="1">Catalyzes the ATP- as well as the pyrophosphate-dependent phosphorylation of a specific serine residue in HPr, a phosphocarrier protein of the phosphoenolpyruvate-dependent sugar phosphotransferase system (PTS). HprK/P also catalyzes the pyrophosphate-producing, inorganic phosphate-dependent dephosphorylation (phosphorolysis) of seryl-phosphorylated HPr (P-Ser-HPr).</text>
</comment>
<comment type="catalytic activity">
    <reaction evidence="1">
        <text>[HPr protein]-L-serine + ATP = [HPr protein]-O-phospho-L-serine + ADP + H(+)</text>
        <dbReference type="Rhea" id="RHEA:46600"/>
        <dbReference type="Rhea" id="RHEA-COMP:11602"/>
        <dbReference type="Rhea" id="RHEA-COMP:11603"/>
        <dbReference type="ChEBI" id="CHEBI:15378"/>
        <dbReference type="ChEBI" id="CHEBI:29999"/>
        <dbReference type="ChEBI" id="CHEBI:30616"/>
        <dbReference type="ChEBI" id="CHEBI:83421"/>
        <dbReference type="ChEBI" id="CHEBI:456216"/>
    </reaction>
</comment>
<comment type="catalytic activity">
    <reaction evidence="1">
        <text>[HPr protein]-O-phospho-L-serine + phosphate + H(+) = [HPr protein]-L-serine + diphosphate</text>
        <dbReference type="Rhea" id="RHEA:46604"/>
        <dbReference type="Rhea" id="RHEA-COMP:11602"/>
        <dbReference type="Rhea" id="RHEA-COMP:11603"/>
        <dbReference type="ChEBI" id="CHEBI:15378"/>
        <dbReference type="ChEBI" id="CHEBI:29999"/>
        <dbReference type="ChEBI" id="CHEBI:33019"/>
        <dbReference type="ChEBI" id="CHEBI:43474"/>
        <dbReference type="ChEBI" id="CHEBI:83421"/>
    </reaction>
</comment>
<comment type="cofactor">
    <cofactor evidence="1">
        <name>Mg(2+)</name>
        <dbReference type="ChEBI" id="CHEBI:18420"/>
    </cofactor>
</comment>
<comment type="subunit">
    <text evidence="1">Homohexamer.</text>
</comment>
<comment type="domain">
    <text evidence="1">The Walker A ATP-binding motif also binds Pi and PPi.</text>
</comment>
<comment type="miscellaneous">
    <text evidence="1">Both phosphorylation and phosphorolysis are carried out by the same active site and suggest a common mechanism for both reactions.</text>
</comment>
<comment type="similarity">
    <text evidence="1">Belongs to the HPrK/P family.</text>
</comment>
<keyword id="KW-0067">ATP-binding</keyword>
<keyword id="KW-0418">Kinase</keyword>
<keyword id="KW-0460">Magnesium</keyword>
<keyword id="KW-0479">Metal-binding</keyword>
<keyword id="KW-0511">Multifunctional enzyme</keyword>
<keyword id="KW-0547">Nucleotide-binding</keyword>
<keyword id="KW-0723">Serine/threonine-protein kinase</keyword>
<keyword id="KW-0808">Transferase</keyword>
<gene>
    <name evidence="1" type="primary">hprK</name>
    <name type="ordered locus">Cvib_1412</name>
</gene>
<feature type="chain" id="PRO_1000085795" description="HPr kinase/phosphorylase">
    <location>
        <begin position="1"/>
        <end position="332"/>
    </location>
</feature>
<feature type="region of interest" description="Important for the catalytic mechanism of both phosphorylation and dephosphorylation" evidence="1">
    <location>
        <begin position="217"/>
        <end position="226"/>
    </location>
</feature>
<feature type="region of interest" description="Important for the catalytic mechanism of dephosphorylation" evidence="1">
    <location>
        <begin position="280"/>
        <end position="285"/>
    </location>
</feature>
<feature type="active site" evidence="1">
    <location>
        <position position="153"/>
    </location>
</feature>
<feature type="active site" evidence="1">
    <location>
        <position position="174"/>
    </location>
</feature>
<feature type="active site" description="Proton acceptor; for phosphorylation activity. Proton donor; for dephosphorylation activity" evidence="1">
    <location>
        <position position="192"/>
    </location>
</feature>
<feature type="active site" evidence="1">
    <location>
        <position position="259"/>
    </location>
</feature>
<feature type="binding site" evidence="1">
    <location>
        <begin position="168"/>
        <end position="175"/>
    </location>
    <ligand>
        <name>ATP</name>
        <dbReference type="ChEBI" id="CHEBI:30616"/>
    </ligand>
</feature>
<feature type="binding site" evidence="1">
    <location>
        <position position="175"/>
    </location>
    <ligand>
        <name>Mg(2+)</name>
        <dbReference type="ChEBI" id="CHEBI:18420"/>
    </ligand>
</feature>
<feature type="binding site" evidence="1">
    <location>
        <position position="218"/>
    </location>
    <ligand>
        <name>Mg(2+)</name>
        <dbReference type="ChEBI" id="CHEBI:18420"/>
    </ligand>
</feature>
<protein>
    <recommendedName>
        <fullName evidence="1">HPr kinase/phosphorylase</fullName>
        <shortName evidence="1">HPrK/P</shortName>
        <ecNumber evidence="1">2.7.11.-</ecNumber>
        <ecNumber evidence="1">2.7.4.-</ecNumber>
    </recommendedName>
    <alternativeName>
        <fullName evidence="1">HPr(Ser) kinase/phosphorylase</fullName>
    </alternativeName>
</protein>
<name>HPRK_CHLPM</name>